<protein>
    <recommendedName>
        <fullName evidence="2">Elongation factor Tu</fullName>
        <shortName evidence="2">EF-Tu</shortName>
        <ecNumber evidence="2">3.6.5.3</ecNumber>
    </recommendedName>
</protein>
<organism>
    <name type="scientific">Rhodococcus jostii (strain RHA1)</name>
    <dbReference type="NCBI Taxonomy" id="101510"/>
    <lineage>
        <taxon>Bacteria</taxon>
        <taxon>Bacillati</taxon>
        <taxon>Actinomycetota</taxon>
        <taxon>Actinomycetes</taxon>
        <taxon>Mycobacteriales</taxon>
        <taxon>Nocardiaceae</taxon>
        <taxon>Rhodococcus</taxon>
    </lineage>
</organism>
<reference key="1">
    <citation type="journal article" date="2006" name="Proc. Natl. Acad. Sci. U.S.A.">
        <title>The complete genome of Rhodococcus sp. RHA1 provides insights into a catabolic powerhouse.</title>
        <authorList>
            <person name="McLeod M.P."/>
            <person name="Warren R.L."/>
            <person name="Hsiao W.W.L."/>
            <person name="Araki N."/>
            <person name="Myhre M."/>
            <person name="Fernandes C."/>
            <person name="Miyazawa D."/>
            <person name="Wong W."/>
            <person name="Lillquist A.L."/>
            <person name="Wang D."/>
            <person name="Dosanjh M."/>
            <person name="Hara H."/>
            <person name="Petrescu A."/>
            <person name="Morin R.D."/>
            <person name="Yang G."/>
            <person name="Stott J.M."/>
            <person name="Schein J.E."/>
            <person name="Shin H."/>
            <person name="Smailus D."/>
            <person name="Siddiqui A.S."/>
            <person name="Marra M.A."/>
            <person name="Jones S.J.M."/>
            <person name="Holt R."/>
            <person name="Brinkman F.S.L."/>
            <person name="Miyauchi K."/>
            <person name="Fukuda M."/>
            <person name="Davies J.E."/>
            <person name="Mohn W.W."/>
            <person name="Eltis L.D."/>
        </authorList>
    </citation>
    <scope>NUCLEOTIDE SEQUENCE [LARGE SCALE GENOMIC DNA]</scope>
    <source>
        <strain>RHA1</strain>
    </source>
</reference>
<sequence>MAKAKFERTKPHVNIGTIGHVDHGKTTLTAAITKVLHDAYPDLNEASAFDEIDKAPEEKARGITINISHVEYQTEKRHYAHVDAPGHADYIKNMITGAAQMDGAILVVAATDGPMPQTREHVLLARQVGVPYILVALNKADMVDDDEIIELVEMEVRELLAAQEFDEDAPVVKVSALKALEGDPEWTKNILELMAAVDESIPDPVRETEKPFLMPVEDVFTITGRGTVVTGRIERGVINVNEDVEIVGIKETKTKTTVTGIEMFRKLLDSGQAGDNVGLLVRGIKREDVERGQVVVKPGTTTPHTEFEGQAYILSKDEGGRHTPFFNNYRPQFYFRTTDVTGVVTLPEGTEMVMPGDNTEMSVKLIQPVAMDEGLRFAIREGGRTVGAGKVTKINK</sequence>
<name>EFTU_RHOJR</name>
<keyword id="KW-0963">Cytoplasm</keyword>
<keyword id="KW-0251">Elongation factor</keyword>
<keyword id="KW-0342">GTP-binding</keyword>
<keyword id="KW-0378">Hydrolase</keyword>
<keyword id="KW-0460">Magnesium</keyword>
<keyword id="KW-0479">Metal-binding</keyword>
<keyword id="KW-0547">Nucleotide-binding</keyword>
<keyword id="KW-0648">Protein biosynthesis</keyword>
<dbReference type="EC" id="3.6.5.3" evidence="2"/>
<dbReference type="EMBL" id="CP000431">
    <property type="protein sequence ID" value="ABG93732.1"/>
    <property type="molecule type" value="Genomic_DNA"/>
</dbReference>
<dbReference type="RefSeq" id="WP_005252203.1">
    <property type="nucleotide sequence ID" value="NC_008268.1"/>
</dbReference>
<dbReference type="SMR" id="Q0SFF4"/>
<dbReference type="GeneID" id="69893615"/>
<dbReference type="KEGG" id="rha:RHA1_ro01921"/>
<dbReference type="eggNOG" id="COG0050">
    <property type="taxonomic scope" value="Bacteria"/>
</dbReference>
<dbReference type="HOGENOM" id="CLU_007265_0_1_11"/>
<dbReference type="OrthoDB" id="9803139at2"/>
<dbReference type="Proteomes" id="UP000008710">
    <property type="component" value="Chromosome"/>
</dbReference>
<dbReference type="GO" id="GO:0005829">
    <property type="term" value="C:cytosol"/>
    <property type="evidence" value="ECO:0007669"/>
    <property type="project" value="TreeGrafter"/>
</dbReference>
<dbReference type="GO" id="GO:0005525">
    <property type="term" value="F:GTP binding"/>
    <property type="evidence" value="ECO:0007669"/>
    <property type="project" value="UniProtKB-UniRule"/>
</dbReference>
<dbReference type="GO" id="GO:0003924">
    <property type="term" value="F:GTPase activity"/>
    <property type="evidence" value="ECO:0007669"/>
    <property type="project" value="InterPro"/>
</dbReference>
<dbReference type="GO" id="GO:0003746">
    <property type="term" value="F:translation elongation factor activity"/>
    <property type="evidence" value="ECO:0007669"/>
    <property type="project" value="UniProtKB-UniRule"/>
</dbReference>
<dbReference type="CDD" id="cd01884">
    <property type="entry name" value="EF_Tu"/>
    <property type="match status" value="1"/>
</dbReference>
<dbReference type="CDD" id="cd03697">
    <property type="entry name" value="EFTU_II"/>
    <property type="match status" value="1"/>
</dbReference>
<dbReference type="CDD" id="cd03707">
    <property type="entry name" value="EFTU_III"/>
    <property type="match status" value="1"/>
</dbReference>
<dbReference type="FunFam" id="2.40.30.10:FF:000001">
    <property type="entry name" value="Elongation factor Tu"/>
    <property type="match status" value="1"/>
</dbReference>
<dbReference type="FunFam" id="3.40.50.300:FF:000003">
    <property type="entry name" value="Elongation factor Tu"/>
    <property type="match status" value="1"/>
</dbReference>
<dbReference type="Gene3D" id="3.40.50.300">
    <property type="entry name" value="P-loop containing nucleotide triphosphate hydrolases"/>
    <property type="match status" value="1"/>
</dbReference>
<dbReference type="Gene3D" id="2.40.30.10">
    <property type="entry name" value="Translation factors"/>
    <property type="match status" value="2"/>
</dbReference>
<dbReference type="HAMAP" id="MF_00118_B">
    <property type="entry name" value="EF_Tu_B"/>
    <property type="match status" value="1"/>
</dbReference>
<dbReference type="InterPro" id="IPR041709">
    <property type="entry name" value="EF-Tu_GTP-bd"/>
</dbReference>
<dbReference type="InterPro" id="IPR050055">
    <property type="entry name" value="EF-Tu_GTPase"/>
</dbReference>
<dbReference type="InterPro" id="IPR004161">
    <property type="entry name" value="EFTu-like_2"/>
</dbReference>
<dbReference type="InterPro" id="IPR033720">
    <property type="entry name" value="EFTU_2"/>
</dbReference>
<dbReference type="InterPro" id="IPR031157">
    <property type="entry name" value="G_TR_CS"/>
</dbReference>
<dbReference type="InterPro" id="IPR027417">
    <property type="entry name" value="P-loop_NTPase"/>
</dbReference>
<dbReference type="InterPro" id="IPR005225">
    <property type="entry name" value="Small_GTP-bd"/>
</dbReference>
<dbReference type="InterPro" id="IPR000795">
    <property type="entry name" value="T_Tr_GTP-bd_dom"/>
</dbReference>
<dbReference type="InterPro" id="IPR009000">
    <property type="entry name" value="Transl_B-barrel_sf"/>
</dbReference>
<dbReference type="InterPro" id="IPR009001">
    <property type="entry name" value="Transl_elong_EF1A/Init_IF2_C"/>
</dbReference>
<dbReference type="InterPro" id="IPR004541">
    <property type="entry name" value="Transl_elong_EFTu/EF1A_bac/org"/>
</dbReference>
<dbReference type="InterPro" id="IPR004160">
    <property type="entry name" value="Transl_elong_EFTu/EF1A_C"/>
</dbReference>
<dbReference type="NCBIfam" id="TIGR00485">
    <property type="entry name" value="EF-Tu"/>
    <property type="match status" value="1"/>
</dbReference>
<dbReference type="NCBIfam" id="NF000766">
    <property type="entry name" value="PRK00049.1"/>
    <property type="match status" value="1"/>
</dbReference>
<dbReference type="NCBIfam" id="NF009372">
    <property type="entry name" value="PRK12735.1"/>
    <property type="match status" value="1"/>
</dbReference>
<dbReference type="NCBIfam" id="NF009373">
    <property type="entry name" value="PRK12736.1"/>
    <property type="match status" value="1"/>
</dbReference>
<dbReference type="NCBIfam" id="TIGR00231">
    <property type="entry name" value="small_GTP"/>
    <property type="match status" value="1"/>
</dbReference>
<dbReference type="PANTHER" id="PTHR43721:SF22">
    <property type="entry name" value="ELONGATION FACTOR TU, MITOCHONDRIAL"/>
    <property type="match status" value="1"/>
</dbReference>
<dbReference type="PANTHER" id="PTHR43721">
    <property type="entry name" value="ELONGATION FACTOR TU-RELATED"/>
    <property type="match status" value="1"/>
</dbReference>
<dbReference type="Pfam" id="PF00009">
    <property type="entry name" value="GTP_EFTU"/>
    <property type="match status" value="1"/>
</dbReference>
<dbReference type="Pfam" id="PF03144">
    <property type="entry name" value="GTP_EFTU_D2"/>
    <property type="match status" value="1"/>
</dbReference>
<dbReference type="Pfam" id="PF03143">
    <property type="entry name" value="GTP_EFTU_D3"/>
    <property type="match status" value="1"/>
</dbReference>
<dbReference type="PRINTS" id="PR00315">
    <property type="entry name" value="ELONGATNFCT"/>
</dbReference>
<dbReference type="SUPFAM" id="SSF50465">
    <property type="entry name" value="EF-Tu/eEF-1alpha/eIF2-gamma C-terminal domain"/>
    <property type="match status" value="1"/>
</dbReference>
<dbReference type="SUPFAM" id="SSF52540">
    <property type="entry name" value="P-loop containing nucleoside triphosphate hydrolases"/>
    <property type="match status" value="1"/>
</dbReference>
<dbReference type="SUPFAM" id="SSF50447">
    <property type="entry name" value="Translation proteins"/>
    <property type="match status" value="1"/>
</dbReference>
<dbReference type="PROSITE" id="PS00301">
    <property type="entry name" value="G_TR_1"/>
    <property type="match status" value="1"/>
</dbReference>
<dbReference type="PROSITE" id="PS51722">
    <property type="entry name" value="G_TR_2"/>
    <property type="match status" value="1"/>
</dbReference>
<feature type="chain" id="PRO_1000015739" description="Elongation factor Tu">
    <location>
        <begin position="1"/>
        <end position="396"/>
    </location>
</feature>
<feature type="domain" description="tr-type G">
    <location>
        <begin position="10"/>
        <end position="205"/>
    </location>
</feature>
<feature type="region of interest" description="G1" evidence="1">
    <location>
        <begin position="19"/>
        <end position="26"/>
    </location>
</feature>
<feature type="region of interest" description="G2" evidence="1">
    <location>
        <begin position="62"/>
        <end position="66"/>
    </location>
</feature>
<feature type="region of interest" description="G3" evidence="1">
    <location>
        <begin position="83"/>
        <end position="86"/>
    </location>
</feature>
<feature type="region of interest" description="G4" evidence="1">
    <location>
        <begin position="138"/>
        <end position="141"/>
    </location>
</feature>
<feature type="region of interest" description="G5" evidence="1">
    <location>
        <begin position="175"/>
        <end position="177"/>
    </location>
</feature>
<feature type="binding site" evidence="2">
    <location>
        <begin position="19"/>
        <end position="26"/>
    </location>
    <ligand>
        <name>GTP</name>
        <dbReference type="ChEBI" id="CHEBI:37565"/>
    </ligand>
</feature>
<feature type="binding site" evidence="2">
    <location>
        <position position="26"/>
    </location>
    <ligand>
        <name>Mg(2+)</name>
        <dbReference type="ChEBI" id="CHEBI:18420"/>
    </ligand>
</feature>
<feature type="binding site" evidence="2">
    <location>
        <begin position="83"/>
        <end position="87"/>
    </location>
    <ligand>
        <name>GTP</name>
        <dbReference type="ChEBI" id="CHEBI:37565"/>
    </ligand>
</feature>
<feature type="binding site" evidence="2">
    <location>
        <begin position="138"/>
        <end position="141"/>
    </location>
    <ligand>
        <name>GTP</name>
        <dbReference type="ChEBI" id="CHEBI:37565"/>
    </ligand>
</feature>
<comment type="function">
    <text evidence="2">GTP hydrolase that promotes the GTP-dependent binding of aminoacyl-tRNA to the A-site of ribosomes during protein biosynthesis.</text>
</comment>
<comment type="catalytic activity">
    <reaction evidence="2">
        <text>GTP + H2O = GDP + phosphate + H(+)</text>
        <dbReference type="Rhea" id="RHEA:19669"/>
        <dbReference type="ChEBI" id="CHEBI:15377"/>
        <dbReference type="ChEBI" id="CHEBI:15378"/>
        <dbReference type="ChEBI" id="CHEBI:37565"/>
        <dbReference type="ChEBI" id="CHEBI:43474"/>
        <dbReference type="ChEBI" id="CHEBI:58189"/>
        <dbReference type="EC" id="3.6.5.3"/>
    </reaction>
    <physiologicalReaction direction="left-to-right" evidence="2">
        <dbReference type="Rhea" id="RHEA:19670"/>
    </physiologicalReaction>
</comment>
<comment type="subunit">
    <text evidence="2">Monomer.</text>
</comment>
<comment type="subcellular location">
    <subcellularLocation>
        <location evidence="2">Cytoplasm</location>
    </subcellularLocation>
</comment>
<comment type="similarity">
    <text evidence="2">Belongs to the TRAFAC class translation factor GTPase superfamily. Classic translation factor GTPase family. EF-Tu/EF-1A subfamily.</text>
</comment>
<evidence type="ECO:0000250" key="1"/>
<evidence type="ECO:0000255" key="2">
    <source>
        <dbReference type="HAMAP-Rule" id="MF_00118"/>
    </source>
</evidence>
<accession>Q0SFF4</accession>
<proteinExistence type="inferred from homology"/>
<gene>
    <name evidence="2" type="primary">tuf</name>
    <name type="ordered locus">RHA1_ro01921</name>
</gene>